<gene>
    <name evidence="1" type="primary">thiG</name>
    <name type="ordered locus">YPO3742</name>
    <name type="ordered locus">y0488</name>
    <name type="ordered locus">YP_3106</name>
</gene>
<accession>Q8ZAP9</accession>
<accession>Q0WAR6</accession>
<accession>Q8D1H1</accession>
<feature type="chain" id="PRO_0000162882" description="Thiazole synthase">
    <location>
        <begin position="1"/>
        <end position="271"/>
    </location>
</feature>
<feature type="active site" description="Schiff-base intermediate with DXP" evidence="1">
    <location>
        <position position="95"/>
    </location>
</feature>
<feature type="binding site" evidence="1">
    <location>
        <position position="156"/>
    </location>
    <ligand>
        <name>1-deoxy-D-xylulose 5-phosphate</name>
        <dbReference type="ChEBI" id="CHEBI:57792"/>
    </ligand>
</feature>
<feature type="binding site" evidence="1">
    <location>
        <begin position="182"/>
        <end position="183"/>
    </location>
    <ligand>
        <name>1-deoxy-D-xylulose 5-phosphate</name>
        <dbReference type="ChEBI" id="CHEBI:57792"/>
    </ligand>
</feature>
<feature type="binding site" evidence="1">
    <location>
        <begin position="204"/>
        <end position="205"/>
    </location>
    <ligand>
        <name>1-deoxy-D-xylulose 5-phosphate</name>
        <dbReference type="ChEBI" id="CHEBI:57792"/>
    </ligand>
</feature>
<feature type="sequence conflict" description="In Ref. 2 and 3." evidence="2" ref="2 3">
    <original>V</original>
    <variation>I</variation>
    <location>
        <position position="98"/>
    </location>
</feature>
<comment type="function">
    <text evidence="1">Catalyzes the rearrangement of 1-deoxy-D-xylulose 5-phosphate (DXP) to produce the thiazole phosphate moiety of thiamine. Sulfur is provided by the thiocarboxylate moiety of the carrier protein ThiS. In vitro, sulfur can be provided by H(2)S.</text>
</comment>
<comment type="catalytic activity">
    <reaction evidence="1">
        <text>[ThiS sulfur-carrier protein]-C-terminal-Gly-aminoethanethioate + 2-iminoacetate + 1-deoxy-D-xylulose 5-phosphate = [ThiS sulfur-carrier protein]-C-terminal Gly-Gly + 2-[(2R,5Z)-2-carboxy-4-methylthiazol-5(2H)-ylidene]ethyl phosphate + 2 H2O + H(+)</text>
        <dbReference type="Rhea" id="RHEA:26297"/>
        <dbReference type="Rhea" id="RHEA-COMP:12909"/>
        <dbReference type="Rhea" id="RHEA-COMP:19908"/>
        <dbReference type="ChEBI" id="CHEBI:15377"/>
        <dbReference type="ChEBI" id="CHEBI:15378"/>
        <dbReference type="ChEBI" id="CHEBI:57792"/>
        <dbReference type="ChEBI" id="CHEBI:62899"/>
        <dbReference type="ChEBI" id="CHEBI:77846"/>
        <dbReference type="ChEBI" id="CHEBI:90778"/>
        <dbReference type="ChEBI" id="CHEBI:232372"/>
        <dbReference type="EC" id="2.8.1.10"/>
    </reaction>
</comment>
<comment type="pathway">
    <text evidence="1">Cofactor biosynthesis; thiamine diphosphate biosynthesis.</text>
</comment>
<comment type="subunit">
    <text evidence="1">Homotetramer. Forms heterodimers with either ThiH or ThiS.</text>
</comment>
<comment type="subcellular location">
    <subcellularLocation>
        <location evidence="1">Cytoplasm</location>
    </subcellularLocation>
</comment>
<comment type="similarity">
    <text evidence="1">Belongs to the ThiG family.</text>
</comment>
<comment type="sequence caution" evidence="2">
    <conflict type="erroneous initiation">
        <sequence resource="EMBL-CDS" id="AAM84077"/>
    </conflict>
</comment>
<comment type="sequence caution" evidence="2">
    <conflict type="erroneous initiation">
        <sequence resource="EMBL-CDS" id="AAS63276"/>
    </conflict>
</comment>
<comment type="sequence caution" evidence="2">
    <conflict type="erroneous initiation">
        <sequence resource="EMBL-CDS" id="CAL22329"/>
    </conflict>
</comment>
<reference key="1">
    <citation type="journal article" date="2001" name="Nature">
        <title>Genome sequence of Yersinia pestis, the causative agent of plague.</title>
        <authorList>
            <person name="Parkhill J."/>
            <person name="Wren B.W."/>
            <person name="Thomson N.R."/>
            <person name="Titball R.W."/>
            <person name="Holden M.T.G."/>
            <person name="Prentice M.B."/>
            <person name="Sebaihia M."/>
            <person name="James K.D."/>
            <person name="Churcher C.M."/>
            <person name="Mungall K.L."/>
            <person name="Baker S."/>
            <person name="Basham D."/>
            <person name="Bentley S.D."/>
            <person name="Brooks K."/>
            <person name="Cerdeno-Tarraga A.-M."/>
            <person name="Chillingworth T."/>
            <person name="Cronin A."/>
            <person name="Davies R.M."/>
            <person name="Davis P."/>
            <person name="Dougan G."/>
            <person name="Feltwell T."/>
            <person name="Hamlin N."/>
            <person name="Holroyd S."/>
            <person name="Jagels K."/>
            <person name="Karlyshev A.V."/>
            <person name="Leather S."/>
            <person name="Moule S."/>
            <person name="Oyston P.C.F."/>
            <person name="Quail M.A."/>
            <person name="Rutherford K.M."/>
            <person name="Simmonds M."/>
            <person name="Skelton J."/>
            <person name="Stevens K."/>
            <person name="Whitehead S."/>
            <person name="Barrell B.G."/>
        </authorList>
    </citation>
    <scope>NUCLEOTIDE SEQUENCE [LARGE SCALE GENOMIC DNA]</scope>
    <source>
        <strain>CO-92 / Biovar Orientalis</strain>
    </source>
</reference>
<reference key="2">
    <citation type="journal article" date="2002" name="J. Bacteriol.">
        <title>Genome sequence of Yersinia pestis KIM.</title>
        <authorList>
            <person name="Deng W."/>
            <person name="Burland V."/>
            <person name="Plunkett G. III"/>
            <person name="Boutin A."/>
            <person name="Mayhew G.F."/>
            <person name="Liss P."/>
            <person name="Perna N.T."/>
            <person name="Rose D.J."/>
            <person name="Mau B."/>
            <person name="Zhou S."/>
            <person name="Schwartz D.C."/>
            <person name="Fetherston J.D."/>
            <person name="Lindler L.E."/>
            <person name="Brubaker R.R."/>
            <person name="Plano G.V."/>
            <person name="Straley S.C."/>
            <person name="McDonough K.A."/>
            <person name="Nilles M.L."/>
            <person name="Matson J.S."/>
            <person name="Blattner F.R."/>
            <person name="Perry R.D."/>
        </authorList>
    </citation>
    <scope>NUCLEOTIDE SEQUENCE [LARGE SCALE GENOMIC DNA]</scope>
    <source>
        <strain>KIM10+ / Biovar Mediaevalis</strain>
    </source>
</reference>
<reference key="3">
    <citation type="journal article" date="2004" name="DNA Res.">
        <title>Complete genome sequence of Yersinia pestis strain 91001, an isolate avirulent to humans.</title>
        <authorList>
            <person name="Song Y."/>
            <person name="Tong Z."/>
            <person name="Wang J."/>
            <person name="Wang L."/>
            <person name="Guo Z."/>
            <person name="Han Y."/>
            <person name="Zhang J."/>
            <person name="Pei D."/>
            <person name="Zhou D."/>
            <person name="Qin H."/>
            <person name="Pang X."/>
            <person name="Han Y."/>
            <person name="Zhai J."/>
            <person name="Li M."/>
            <person name="Cui B."/>
            <person name="Qi Z."/>
            <person name="Jin L."/>
            <person name="Dai R."/>
            <person name="Chen F."/>
            <person name="Li S."/>
            <person name="Ye C."/>
            <person name="Du Z."/>
            <person name="Lin W."/>
            <person name="Wang J."/>
            <person name="Yu J."/>
            <person name="Yang H."/>
            <person name="Wang J."/>
            <person name="Huang P."/>
            <person name="Yang R."/>
        </authorList>
    </citation>
    <scope>NUCLEOTIDE SEQUENCE [LARGE SCALE GENOMIC DNA]</scope>
    <source>
        <strain>91001 / Biovar Mediaevalis</strain>
    </source>
</reference>
<sequence length="271" mass="28873">MLKIADTTFTSRLFTGTGKFSSPELMLEALRASGSQLITMAMKRVDLQSGNDAILAPLRQLGVRLLPNTSGAKTAEEAIFAARLAREALNTHWVKLEVHPDVRYLLPDPIETLKAAEVLVKEGFVVLPYCGADPVLCKRLEEVGCAAVMPLGSPIGSNLGLRTRDFLQIIIEQSKVPVVVDAGIGAPSHALEALELGADAVLVNTAIAVAHSPVQMAHAFRLAVESGERARLAGLGASPFNPSQPDTLQLRATATSPLTGFLSQLEEQDHV</sequence>
<keyword id="KW-0963">Cytoplasm</keyword>
<keyword id="KW-1185">Reference proteome</keyword>
<keyword id="KW-0704">Schiff base</keyword>
<keyword id="KW-0784">Thiamine biosynthesis</keyword>
<keyword id="KW-0808">Transferase</keyword>
<name>THIG_YERPE</name>
<dbReference type="EC" id="2.8.1.10" evidence="1"/>
<dbReference type="EMBL" id="AL590842">
    <property type="protein sequence ID" value="CAL22329.1"/>
    <property type="status" value="ALT_INIT"/>
    <property type="molecule type" value="Genomic_DNA"/>
</dbReference>
<dbReference type="EMBL" id="AE009952">
    <property type="protein sequence ID" value="AAM84077.1"/>
    <property type="status" value="ALT_INIT"/>
    <property type="molecule type" value="Genomic_DNA"/>
</dbReference>
<dbReference type="EMBL" id="AE017042">
    <property type="protein sequence ID" value="AAS63276.1"/>
    <property type="status" value="ALT_INIT"/>
    <property type="molecule type" value="Genomic_DNA"/>
</dbReference>
<dbReference type="PIR" id="AF0455">
    <property type="entry name" value="AF0455"/>
</dbReference>
<dbReference type="RefSeq" id="WP_002217273.1">
    <property type="nucleotide sequence ID" value="NZ_VEZU01000110.1"/>
</dbReference>
<dbReference type="SMR" id="Q8ZAP9"/>
<dbReference type="STRING" id="214092.YPO3742"/>
<dbReference type="PaxDb" id="214092-YPO3742"/>
<dbReference type="EnsemblBacteria" id="AAS63276">
    <property type="protein sequence ID" value="AAS63276"/>
    <property type="gene ID" value="YP_3106"/>
</dbReference>
<dbReference type="KEGG" id="ype:YPO3742"/>
<dbReference type="KEGG" id="ypk:y0488"/>
<dbReference type="KEGG" id="ypm:YP_3106"/>
<dbReference type="PATRIC" id="fig|632.151.peg.2476"/>
<dbReference type="eggNOG" id="COG2022">
    <property type="taxonomic scope" value="Bacteria"/>
</dbReference>
<dbReference type="HOGENOM" id="CLU_062233_0_0_6"/>
<dbReference type="OrthoDB" id="9805935at2"/>
<dbReference type="UniPathway" id="UPA00060"/>
<dbReference type="Proteomes" id="UP000000815">
    <property type="component" value="Chromosome"/>
</dbReference>
<dbReference type="Proteomes" id="UP000001019">
    <property type="component" value="Chromosome"/>
</dbReference>
<dbReference type="Proteomes" id="UP000002490">
    <property type="component" value="Chromosome"/>
</dbReference>
<dbReference type="GO" id="GO:1902508">
    <property type="term" value="C:2-iminoacetate synthase complex"/>
    <property type="evidence" value="ECO:0000318"/>
    <property type="project" value="GO_Central"/>
</dbReference>
<dbReference type="GO" id="GO:0005737">
    <property type="term" value="C:cytoplasm"/>
    <property type="evidence" value="ECO:0007669"/>
    <property type="project" value="UniProtKB-SubCell"/>
</dbReference>
<dbReference type="GO" id="GO:1990107">
    <property type="term" value="F:thiazole synthase activity"/>
    <property type="evidence" value="ECO:0007669"/>
    <property type="project" value="UniProtKB-EC"/>
</dbReference>
<dbReference type="GO" id="GO:0009228">
    <property type="term" value="P:thiamine biosynthetic process"/>
    <property type="evidence" value="ECO:0000318"/>
    <property type="project" value="GO_Central"/>
</dbReference>
<dbReference type="GO" id="GO:0009229">
    <property type="term" value="P:thiamine diphosphate biosynthetic process"/>
    <property type="evidence" value="ECO:0000318"/>
    <property type="project" value="GO_Central"/>
</dbReference>
<dbReference type="CDD" id="cd04728">
    <property type="entry name" value="ThiG"/>
    <property type="match status" value="1"/>
</dbReference>
<dbReference type="FunFam" id="3.20.20.70:FF:000049">
    <property type="entry name" value="Thiazole synthase"/>
    <property type="match status" value="1"/>
</dbReference>
<dbReference type="Gene3D" id="3.20.20.70">
    <property type="entry name" value="Aldolase class I"/>
    <property type="match status" value="1"/>
</dbReference>
<dbReference type="HAMAP" id="MF_00443">
    <property type="entry name" value="ThiG"/>
    <property type="match status" value="1"/>
</dbReference>
<dbReference type="InterPro" id="IPR013785">
    <property type="entry name" value="Aldolase_TIM"/>
</dbReference>
<dbReference type="InterPro" id="IPR033983">
    <property type="entry name" value="Thiazole_synthase_ThiG"/>
</dbReference>
<dbReference type="InterPro" id="IPR008867">
    <property type="entry name" value="ThiG"/>
</dbReference>
<dbReference type="PANTHER" id="PTHR34266">
    <property type="entry name" value="THIAZOLE SYNTHASE"/>
    <property type="match status" value="1"/>
</dbReference>
<dbReference type="PANTHER" id="PTHR34266:SF2">
    <property type="entry name" value="THIAZOLE SYNTHASE"/>
    <property type="match status" value="1"/>
</dbReference>
<dbReference type="Pfam" id="PF05690">
    <property type="entry name" value="ThiG"/>
    <property type="match status" value="1"/>
</dbReference>
<dbReference type="SUPFAM" id="SSF110399">
    <property type="entry name" value="ThiG-like"/>
    <property type="match status" value="1"/>
</dbReference>
<protein>
    <recommendedName>
        <fullName evidence="1">Thiazole synthase</fullName>
        <ecNumber evidence="1">2.8.1.10</ecNumber>
    </recommendedName>
</protein>
<proteinExistence type="inferred from homology"/>
<organism>
    <name type="scientific">Yersinia pestis</name>
    <dbReference type="NCBI Taxonomy" id="632"/>
    <lineage>
        <taxon>Bacteria</taxon>
        <taxon>Pseudomonadati</taxon>
        <taxon>Pseudomonadota</taxon>
        <taxon>Gammaproteobacteria</taxon>
        <taxon>Enterobacterales</taxon>
        <taxon>Yersiniaceae</taxon>
        <taxon>Yersinia</taxon>
    </lineage>
</organism>
<evidence type="ECO:0000255" key="1">
    <source>
        <dbReference type="HAMAP-Rule" id="MF_00443"/>
    </source>
</evidence>
<evidence type="ECO:0000305" key="2"/>